<dbReference type="EMBL" id="HE600951">
    <property type="protein sequence ID" value="CAP22374.1"/>
    <property type="molecule type" value="Genomic_DNA"/>
</dbReference>
<dbReference type="SMR" id="Q626S1"/>
<dbReference type="FunCoup" id="Q626S1">
    <property type="interactions" value="2228"/>
</dbReference>
<dbReference type="STRING" id="6238.Q626S1"/>
<dbReference type="EnsemblMetazoa" id="CBG00854.1">
    <property type="protein sequence ID" value="CBG00854.1"/>
    <property type="gene ID" value="WBGene00024183"/>
</dbReference>
<dbReference type="KEGG" id="cbr:CBG_00854"/>
<dbReference type="CTD" id="8573053"/>
<dbReference type="WormBase" id="CBG00854">
    <property type="protein sequence ID" value="CBP05921"/>
    <property type="gene ID" value="WBGene00024183"/>
    <property type="gene designation" value="Cbr-mdt-22"/>
</dbReference>
<dbReference type="eggNOG" id="KOG3304">
    <property type="taxonomic scope" value="Eukaryota"/>
</dbReference>
<dbReference type="HOGENOM" id="CLU_117242_2_0_1"/>
<dbReference type="InParanoid" id="Q626S1"/>
<dbReference type="OMA" id="ILRYDAM"/>
<dbReference type="OrthoDB" id="203279at2759"/>
<dbReference type="Proteomes" id="UP000008549">
    <property type="component" value="Unassembled WGS sequence"/>
</dbReference>
<dbReference type="GO" id="GO:0016592">
    <property type="term" value="C:mediator complex"/>
    <property type="evidence" value="ECO:0000318"/>
    <property type="project" value="GO_Central"/>
</dbReference>
<dbReference type="GO" id="GO:0003712">
    <property type="term" value="F:transcription coregulator activity"/>
    <property type="evidence" value="ECO:0007669"/>
    <property type="project" value="InterPro"/>
</dbReference>
<dbReference type="GO" id="GO:0006357">
    <property type="term" value="P:regulation of transcription by RNA polymerase II"/>
    <property type="evidence" value="ECO:0007669"/>
    <property type="project" value="InterPro"/>
</dbReference>
<dbReference type="InterPro" id="IPR009332">
    <property type="entry name" value="Med22"/>
</dbReference>
<dbReference type="PANTHER" id="PTHR12434">
    <property type="entry name" value="MEDIATOR OF RNA POLYMERASE II TRANSCRIPTION SUBUNIT 22"/>
    <property type="match status" value="1"/>
</dbReference>
<dbReference type="PANTHER" id="PTHR12434:SF6">
    <property type="entry name" value="MEDIATOR OF RNA POLYMERASE II TRANSCRIPTION SUBUNIT 22"/>
    <property type="match status" value="1"/>
</dbReference>
<dbReference type="Pfam" id="PF06179">
    <property type="entry name" value="Med22"/>
    <property type="match status" value="1"/>
</dbReference>
<gene>
    <name type="primary">mdt-22</name>
    <name type="ORF">CBG00854</name>
</gene>
<protein>
    <recommendedName>
        <fullName>Mediator of RNA polymerase II transcription subunit 22</fullName>
    </recommendedName>
    <alternativeName>
        <fullName>Mediator complex subunit 22</fullName>
    </alternativeName>
</protein>
<evidence type="ECO:0000250" key="1"/>
<evidence type="ECO:0000305" key="2"/>
<feature type="chain" id="PRO_0000308571" description="Mediator of RNA polymerase II transcription subunit 22">
    <location>
        <begin position="1"/>
        <end position="153"/>
    </location>
</feature>
<organism>
    <name type="scientific">Caenorhabditis briggsae</name>
    <dbReference type="NCBI Taxonomy" id="6238"/>
    <lineage>
        <taxon>Eukaryota</taxon>
        <taxon>Metazoa</taxon>
        <taxon>Ecdysozoa</taxon>
        <taxon>Nematoda</taxon>
        <taxon>Chromadorea</taxon>
        <taxon>Rhabditida</taxon>
        <taxon>Rhabditina</taxon>
        <taxon>Rhabditomorpha</taxon>
        <taxon>Rhabditoidea</taxon>
        <taxon>Rhabditidae</taxon>
        <taxon>Peloderinae</taxon>
        <taxon>Caenorhabditis</taxon>
    </lineage>
</organism>
<name>MED22_CAEBR</name>
<accession>Q626S1</accession>
<accession>A8WPG7</accession>
<comment type="function">
    <text evidence="1">Component of the Mediator complex, a coactivator involved in the regulated transcription of nearly all RNA polymerase II-dependent genes. Mediator functions as a bridge to convey information from gene-specific regulatory proteins to the basal RNA polymerase II transcription machinery. Mediator is recruited to promoters by direct interactions with regulatory proteins and serves as a scaffold for the assembly of a functional preinitiation complex with RNA polymerase II and the general transcription factors (By similarity).</text>
</comment>
<comment type="subunit">
    <text evidence="1">Component of the Mediator complex.</text>
</comment>
<comment type="subcellular location">
    <subcellularLocation>
        <location evidence="2">Nucleus</location>
    </subcellularLocation>
</comment>
<comment type="similarity">
    <text evidence="2">Belongs to the Mediator complex subunit 22 family.</text>
</comment>
<sequence length="153" mass="17743">MSGNAQKKAASRSMATKKLIIDEFKRRLRDNIKSLNDNFYHIIQAAKVNPDDNAFKNQTGKMTEFYTIKNEMAVRAQLMVRASDELLRLTTDLKEFLILHDFHFLTHNIKQAESQCEDTLRQQSHLHQALDTDVSNMLFALEEEIADNFFLGH</sequence>
<proteinExistence type="inferred from homology"/>
<reference key="1">
    <citation type="journal article" date="2003" name="PLoS Biol.">
        <title>The genome sequence of Caenorhabditis briggsae: a platform for comparative genomics.</title>
        <authorList>
            <person name="Stein L.D."/>
            <person name="Bao Z."/>
            <person name="Blasiar D."/>
            <person name="Blumenthal T."/>
            <person name="Brent M.R."/>
            <person name="Chen N."/>
            <person name="Chinwalla A."/>
            <person name="Clarke L."/>
            <person name="Clee C."/>
            <person name="Coghlan A."/>
            <person name="Coulson A."/>
            <person name="D'Eustachio P."/>
            <person name="Fitch D.H.A."/>
            <person name="Fulton L.A."/>
            <person name="Fulton R.E."/>
            <person name="Griffiths-Jones S."/>
            <person name="Harris T.W."/>
            <person name="Hillier L.W."/>
            <person name="Kamath R."/>
            <person name="Kuwabara P.E."/>
            <person name="Mardis E.R."/>
            <person name="Marra M.A."/>
            <person name="Miner T.L."/>
            <person name="Minx P."/>
            <person name="Mullikin J.C."/>
            <person name="Plumb R.W."/>
            <person name="Rogers J."/>
            <person name="Schein J.E."/>
            <person name="Sohrmann M."/>
            <person name="Spieth J."/>
            <person name="Stajich J.E."/>
            <person name="Wei C."/>
            <person name="Willey D."/>
            <person name="Wilson R.K."/>
            <person name="Durbin R.M."/>
            <person name="Waterston R.H."/>
        </authorList>
    </citation>
    <scope>NUCLEOTIDE SEQUENCE [LARGE SCALE GENOMIC DNA]</scope>
    <source>
        <strain>AF16</strain>
    </source>
</reference>
<keyword id="KW-0010">Activator</keyword>
<keyword id="KW-0539">Nucleus</keyword>
<keyword id="KW-1185">Reference proteome</keyword>
<keyword id="KW-0804">Transcription</keyword>
<keyword id="KW-0805">Transcription regulation</keyword>